<name>PNCB_ACIET</name>
<comment type="function">
    <text evidence="1">Catalyzes the synthesis of beta-nicotinate D-ribonucleotide from nicotinate and 5-phospho-D-ribose 1-phosphate at the expense of ATP.</text>
</comment>
<comment type="catalytic activity">
    <reaction evidence="1">
        <text>nicotinate + 5-phospho-alpha-D-ribose 1-diphosphate + ATP + H2O = nicotinate beta-D-ribonucleotide + ADP + phosphate + diphosphate</text>
        <dbReference type="Rhea" id="RHEA:36163"/>
        <dbReference type="ChEBI" id="CHEBI:15377"/>
        <dbReference type="ChEBI" id="CHEBI:30616"/>
        <dbReference type="ChEBI" id="CHEBI:32544"/>
        <dbReference type="ChEBI" id="CHEBI:33019"/>
        <dbReference type="ChEBI" id="CHEBI:43474"/>
        <dbReference type="ChEBI" id="CHEBI:57502"/>
        <dbReference type="ChEBI" id="CHEBI:58017"/>
        <dbReference type="ChEBI" id="CHEBI:456216"/>
        <dbReference type="EC" id="6.3.4.21"/>
    </reaction>
</comment>
<comment type="pathway">
    <text evidence="1">Cofactor biosynthesis; NAD(+) biosynthesis; nicotinate D-ribonucleotide from nicotinate: step 1/1.</text>
</comment>
<comment type="PTM">
    <text evidence="1">Transiently phosphorylated on a His residue during the reaction cycle. Phosphorylation strongly increases the affinity for substrates and increases the rate of nicotinate D-ribonucleotide production. Dephosphorylation regenerates the low-affinity form of the enzyme, leading to product release.</text>
</comment>
<comment type="similarity">
    <text evidence="1">Belongs to the NAPRTase family.</text>
</comment>
<organism>
    <name type="scientific">Acidovorax ebreus (strain TPSY)</name>
    <name type="common">Diaphorobacter sp. (strain TPSY)</name>
    <dbReference type="NCBI Taxonomy" id="535289"/>
    <lineage>
        <taxon>Bacteria</taxon>
        <taxon>Pseudomonadati</taxon>
        <taxon>Pseudomonadota</taxon>
        <taxon>Betaproteobacteria</taxon>
        <taxon>Burkholderiales</taxon>
        <taxon>Comamonadaceae</taxon>
        <taxon>Diaphorobacter</taxon>
    </lineage>
</organism>
<proteinExistence type="inferred from homology"/>
<evidence type="ECO:0000255" key="1">
    <source>
        <dbReference type="HAMAP-Rule" id="MF_00570"/>
    </source>
</evidence>
<sequence>MIITSLLDTDLYKFTMMQVVLHQFPGAQVEYRFKCRNPGVELAPFVSEIRDEIRALCSLQFQDAELAYLRSLRFIKSDFVDFLGLFRLNEKYIRVSALPSGEIDITITGPWLHTILFEIPVLAIVNEVYFRNTQKVPDFPEGRRRLEAKIGQLQQPGLDSLKIADYGTRRRFSRAWHEEVLRVLCVRLGSDDRRGAPGQFAGTSNVLYAMKLGVTPLGTMAHEYLQACQSLGPRLRDSQVFGFEMWAKEYRGDLGIALSDVYGMSAFLRDFDLYFCKLFDGARHDSGDPFAWGERLLQHYRDNRVDPLTKTLIFSDALTVPRIIELYQRFNGRCQLAFGIGTNLTNDLGYEPLQIVIKMTRCNGQPVAKLSDAPGKNMCNDEKYLAYLRQVFEIPSPQ</sequence>
<reference key="1">
    <citation type="submission" date="2009-01" db="EMBL/GenBank/DDBJ databases">
        <title>Complete sequence of Diaphorobacter sp. TPSY.</title>
        <authorList>
            <consortium name="US DOE Joint Genome Institute"/>
            <person name="Lucas S."/>
            <person name="Copeland A."/>
            <person name="Lapidus A."/>
            <person name="Glavina del Rio T."/>
            <person name="Tice H."/>
            <person name="Bruce D."/>
            <person name="Goodwin L."/>
            <person name="Pitluck S."/>
            <person name="Chertkov O."/>
            <person name="Brettin T."/>
            <person name="Detter J.C."/>
            <person name="Han C."/>
            <person name="Larimer F."/>
            <person name="Land M."/>
            <person name="Hauser L."/>
            <person name="Kyrpides N."/>
            <person name="Mikhailova N."/>
            <person name="Coates J.D."/>
        </authorList>
    </citation>
    <scope>NUCLEOTIDE SEQUENCE [LARGE SCALE GENOMIC DNA]</scope>
    <source>
        <strain>TPSY</strain>
    </source>
</reference>
<gene>
    <name evidence="1" type="primary">pncB</name>
    <name type="ordered locus">Dtpsy_1368</name>
</gene>
<accession>B9MHC7</accession>
<protein>
    <recommendedName>
        <fullName evidence="1">Nicotinate phosphoribosyltransferase</fullName>
        <shortName evidence="1">NAPRTase</shortName>
        <ecNumber evidence="1">6.3.4.21</ecNumber>
    </recommendedName>
</protein>
<dbReference type="EC" id="6.3.4.21" evidence="1"/>
<dbReference type="EMBL" id="CP001392">
    <property type="protein sequence ID" value="ACM32832.1"/>
    <property type="molecule type" value="Genomic_DNA"/>
</dbReference>
<dbReference type="RefSeq" id="WP_011805692.1">
    <property type="nucleotide sequence ID" value="NC_011992.1"/>
</dbReference>
<dbReference type="SMR" id="B9MHC7"/>
<dbReference type="KEGG" id="dia:Dtpsy_1368"/>
<dbReference type="eggNOG" id="COG1488">
    <property type="taxonomic scope" value="Bacteria"/>
</dbReference>
<dbReference type="HOGENOM" id="CLU_030991_1_0_4"/>
<dbReference type="UniPathway" id="UPA00253">
    <property type="reaction ID" value="UER00457"/>
</dbReference>
<dbReference type="Proteomes" id="UP000000450">
    <property type="component" value="Chromosome"/>
</dbReference>
<dbReference type="GO" id="GO:0005829">
    <property type="term" value="C:cytosol"/>
    <property type="evidence" value="ECO:0007669"/>
    <property type="project" value="TreeGrafter"/>
</dbReference>
<dbReference type="GO" id="GO:0004516">
    <property type="term" value="F:nicotinate phosphoribosyltransferase activity"/>
    <property type="evidence" value="ECO:0007669"/>
    <property type="project" value="UniProtKB-UniRule"/>
</dbReference>
<dbReference type="GO" id="GO:0034355">
    <property type="term" value="P:NAD biosynthetic process via the salvage pathway"/>
    <property type="evidence" value="ECO:0007669"/>
    <property type="project" value="TreeGrafter"/>
</dbReference>
<dbReference type="CDD" id="cd01401">
    <property type="entry name" value="PncB_like"/>
    <property type="match status" value="1"/>
</dbReference>
<dbReference type="Gene3D" id="3.20.140.10">
    <property type="entry name" value="nicotinate phosphoribosyltransferase"/>
    <property type="match status" value="1"/>
</dbReference>
<dbReference type="HAMAP" id="MF_00570">
    <property type="entry name" value="NAPRTase"/>
    <property type="match status" value="1"/>
</dbReference>
<dbReference type="InterPro" id="IPR041525">
    <property type="entry name" value="N/Namide_PRibTrfase"/>
</dbReference>
<dbReference type="InterPro" id="IPR040727">
    <property type="entry name" value="NAPRTase_N"/>
</dbReference>
<dbReference type="InterPro" id="IPR006406">
    <property type="entry name" value="Nic_PRibTrfase"/>
</dbReference>
<dbReference type="InterPro" id="IPR007229">
    <property type="entry name" value="Nic_PRibTrfase-Fam"/>
</dbReference>
<dbReference type="InterPro" id="IPR036068">
    <property type="entry name" value="Nicotinate_pribotase-like_C"/>
</dbReference>
<dbReference type="NCBIfam" id="TIGR01514">
    <property type="entry name" value="NAPRTase"/>
    <property type="match status" value="1"/>
</dbReference>
<dbReference type="NCBIfam" id="NF003704">
    <property type="entry name" value="PRK05321.1"/>
    <property type="match status" value="1"/>
</dbReference>
<dbReference type="PANTHER" id="PTHR11098">
    <property type="entry name" value="NICOTINATE PHOSPHORIBOSYLTRANSFERASE"/>
    <property type="match status" value="1"/>
</dbReference>
<dbReference type="PANTHER" id="PTHR11098:SF1">
    <property type="entry name" value="NICOTINATE PHOSPHORIBOSYLTRANSFERASE"/>
    <property type="match status" value="1"/>
</dbReference>
<dbReference type="Pfam" id="PF04095">
    <property type="entry name" value="NAPRTase"/>
    <property type="match status" value="1"/>
</dbReference>
<dbReference type="Pfam" id="PF17767">
    <property type="entry name" value="NAPRTase_N"/>
    <property type="match status" value="1"/>
</dbReference>
<dbReference type="PIRSF" id="PIRSF000484">
    <property type="entry name" value="NAPRT"/>
    <property type="match status" value="1"/>
</dbReference>
<dbReference type="SUPFAM" id="SSF51690">
    <property type="entry name" value="Nicotinate/Quinolinate PRTase C-terminal domain-like"/>
    <property type="match status" value="1"/>
</dbReference>
<dbReference type="SUPFAM" id="SSF54675">
    <property type="entry name" value="Nicotinate/Quinolinate PRTase N-terminal domain-like"/>
    <property type="match status" value="1"/>
</dbReference>
<feature type="chain" id="PRO_1000146839" description="Nicotinate phosphoribosyltransferase">
    <location>
        <begin position="1"/>
        <end position="398"/>
    </location>
</feature>
<feature type="modified residue" description="Phosphohistidine; by autocatalysis" evidence="1">
    <location>
        <position position="222"/>
    </location>
</feature>
<keyword id="KW-0436">Ligase</keyword>
<keyword id="KW-0597">Phosphoprotein</keyword>
<keyword id="KW-0662">Pyridine nucleotide biosynthesis</keyword>
<keyword id="KW-1185">Reference proteome</keyword>